<feature type="chain" id="PRO_1000188834" description="L-ribulose-5-phosphate 3-epimerase UlaE">
    <location>
        <begin position="1"/>
        <end position="284"/>
    </location>
</feature>
<gene>
    <name evidence="1" type="primary">ulaE</name>
    <name type="ordered locus">SG4229</name>
</gene>
<organism>
    <name type="scientific">Salmonella gallinarum (strain 287/91 / NCTC 13346)</name>
    <dbReference type="NCBI Taxonomy" id="550538"/>
    <lineage>
        <taxon>Bacteria</taxon>
        <taxon>Pseudomonadati</taxon>
        <taxon>Pseudomonadota</taxon>
        <taxon>Gammaproteobacteria</taxon>
        <taxon>Enterobacterales</taxon>
        <taxon>Enterobacteriaceae</taxon>
        <taxon>Salmonella</taxon>
    </lineage>
</organism>
<proteinExistence type="inferred from homology"/>
<keyword id="KW-0413">Isomerase</keyword>
<accession>B5R9E4</accession>
<protein>
    <recommendedName>
        <fullName evidence="1">L-ribulose-5-phosphate 3-epimerase UlaE</fullName>
        <ecNumber evidence="1">5.1.3.22</ecNumber>
    </recommendedName>
    <alternativeName>
        <fullName evidence="1">L-ascorbate utilization protein E</fullName>
    </alternativeName>
    <alternativeName>
        <fullName evidence="1">L-xylulose-5-phosphate 3-epimerase</fullName>
    </alternativeName>
</protein>
<name>ULAE_SALG2</name>
<comment type="function">
    <text evidence="1">Catalyzes the isomerization of L-xylulose-5-phosphate to L-ribulose-5-phosphate. Is involved in the anaerobic L-ascorbate utilization.</text>
</comment>
<comment type="catalytic activity">
    <reaction evidence="1">
        <text>L-ribulose 5-phosphate = L-xylulose 5-phosphate</text>
        <dbReference type="Rhea" id="RHEA:18497"/>
        <dbReference type="ChEBI" id="CHEBI:57829"/>
        <dbReference type="ChEBI" id="CHEBI:58226"/>
        <dbReference type="EC" id="5.1.3.22"/>
    </reaction>
</comment>
<comment type="pathway">
    <text evidence="1">Cofactor degradation; L-ascorbate degradation; D-xylulose 5-phosphate from L-ascorbate: step 3/4.</text>
</comment>
<comment type="induction">
    <text evidence="1">Induced by L-ascorbate. Repressed by UlaR.</text>
</comment>
<comment type="similarity">
    <text evidence="1">Belongs to the L-ribulose-5-phosphate 3-epimerase family.</text>
</comment>
<sequence length="284" mass="31806">MLSKQIPLGIYEKALPAGECWLERLRLAKTLGFDFVEMSVDETDARLARLDWSREQRLALVSAVAETGVRVPSMCLSAHRRFPLGSEDDAVRAQGLEIMRKAIQFAQDVGIRVIQLAGYDVYYQQANDETRCRFRDGLKESVDMASRAQVTLAMEIMDYPLMNSISKALGYAHYLNNPWFQLYPDIGNLSAWDNDVQMELQAGIGHIVAVHVKDTKPGVFKNVPFGEGVVDFERCFETLKQSGYCGPYLIEMWSETAENPAAEVAKARDWVKARMASAGLVEAA</sequence>
<reference key="1">
    <citation type="journal article" date="2008" name="Genome Res.">
        <title>Comparative genome analysis of Salmonella enteritidis PT4 and Salmonella gallinarum 287/91 provides insights into evolutionary and host adaptation pathways.</title>
        <authorList>
            <person name="Thomson N.R."/>
            <person name="Clayton D.J."/>
            <person name="Windhorst D."/>
            <person name="Vernikos G."/>
            <person name="Davidson S."/>
            <person name="Churcher C."/>
            <person name="Quail M.A."/>
            <person name="Stevens M."/>
            <person name="Jones M.A."/>
            <person name="Watson M."/>
            <person name="Barron A."/>
            <person name="Layton A."/>
            <person name="Pickard D."/>
            <person name="Kingsley R.A."/>
            <person name="Bignell A."/>
            <person name="Clark L."/>
            <person name="Harris B."/>
            <person name="Ormond D."/>
            <person name="Abdellah Z."/>
            <person name="Brooks K."/>
            <person name="Cherevach I."/>
            <person name="Chillingworth T."/>
            <person name="Woodward J."/>
            <person name="Norberczak H."/>
            <person name="Lord A."/>
            <person name="Arrowsmith C."/>
            <person name="Jagels K."/>
            <person name="Moule S."/>
            <person name="Mungall K."/>
            <person name="Saunders M."/>
            <person name="Whitehead S."/>
            <person name="Chabalgoity J.A."/>
            <person name="Maskell D."/>
            <person name="Humphreys T."/>
            <person name="Roberts M."/>
            <person name="Barrow P.A."/>
            <person name="Dougan G."/>
            <person name="Parkhill J."/>
        </authorList>
    </citation>
    <scope>NUCLEOTIDE SEQUENCE [LARGE SCALE GENOMIC DNA]</scope>
    <source>
        <strain>287/91 / NCTC 13346</strain>
    </source>
</reference>
<dbReference type="EC" id="5.1.3.22" evidence="1"/>
<dbReference type="EMBL" id="AM933173">
    <property type="protein sequence ID" value="CAR39992.1"/>
    <property type="molecule type" value="Genomic_DNA"/>
</dbReference>
<dbReference type="RefSeq" id="WP_000949530.1">
    <property type="nucleotide sequence ID" value="NC_011274.1"/>
</dbReference>
<dbReference type="SMR" id="B5R9E4"/>
<dbReference type="KEGG" id="seg:SG4229"/>
<dbReference type="HOGENOM" id="CLU_082738_0_0_6"/>
<dbReference type="UniPathway" id="UPA00263">
    <property type="reaction ID" value="UER00379"/>
</dbReference>
<dbReference type="Proteomes" id="UP000008321">
    <property type="component" value="Chromosome"/>
</dbReference>
<dbReference type="GO" id="GO:0016861">
    <property type="term" value="F:intramolecular oxidoreductase activity, interconverting aldoses and ketoses"/>
    <property type="evidence" value="ECO:0007669"/>
    <property type="project" value="InterPro"/>
</dbReference>
<dbReference type="GO" id="GO:0034015">
    <property type="term" value="F:L-ribulose-5-phosphate 3-epimerase activity"/>
    <property type="evidence" value="ECO:0007669"/>
    <property type="project" value="UniProtKB-UniRule"/>
</dbReference>
<dbReference type="GO" id="GO:0019854">
    <property type="term" value="P:L-ascorbic acid catabolic process"/>
    <property type="evidence" value="ECO:0007669"/>
    <property type="project" value="UniProtKB-UniRule"/>
</dbReference>
<dbReference type="FunFam" id="3.20.20.150:FF:000003">
    <property type="entry name" value="L-ribulose-5-phosphate 3-epimerase UlaE"/>
    <property type="match status" value="1"/>
</dbReference>
<dbReference type="Gene3D" id="3.20.20.150">
    <property type="entry name" value="Divalent-metal-dependent TIM barrel enzymes"/>
    <property type="match status" value="1"/>
</dbReference>
<dbReference type="HAMAP" id="MF_01951">
    <property type="entry name" value="UlaE"/>
    <property type="match status" value="1"/>
</dbReference>
<dbReference type="InterPro" id="IPR004560">
    <property type="entry name" value="L-Ru-5P_3-Epase"/>
</dbReference>
<dbReference type="InterPro" id="IPR023492">
    <property type="entry name" value="L-Ru-5P_3-Epase_Enterobacteria"/>
</dbReference>
<dbReference type="InterPro" id="IPR050417">
    <property type="entry name" value="Sugar_Epim/Isomerase"/>
</dbReference>
<dbReference type="InterPro" id="IPR036237">
    <property type="entry name" value="Xyl_isomerase-like_sf"/>
</dbReference>
<dbReference type="InterPro" id="IPR013022">
    <property type="entry name" value="Xyl_isomerase-like_TIM-brl"/>
</dbReference>
<dbReference type="NCBIfam" id="TIGR00542">
    <property type="entry name" value="hxl6Piso_put"/>
    <property type="match status" value="1"/>
</dbReference>
<dbReference type="NCBIfam" id="NF009688">
    <property type="entry name" value="PRK13209.1"/>
    <property type="match status" value="1"/>
</dbReference>
<dbReference type="NCBIfam" id="NF009689">
    <property type="entry name" value="PRK13210.1"/>
    <property type="match status" value="1"/>
</dbReference>
<dbReference type="PANTHER" id="PTHR43489">
    <property type="entry name" value="ISOMERASE"/>
    <property type="match status" value="1"/>
</dbReference>
<dbReference type="PANTHER" id="PTHR43489:SF8">
    <property type="entry name" value="L-RIBULOSE-5-PHOSPHATE 3-EPIMERASE ULAE"/>
    <property type="match status" value="1"/>
</dbReference>
<dbReference type="Pfam" id="PF01261">
    <property type="entry name" value="AP_endonuc_2"/>
    <property type="match status" value="1"/>
</dbReference>
<dbReference type="SUPFAM" id="SSF51658">
    <property type="entry name" value="Xylose isomerase-like"/>
    <property type="match status" value="1"/>
</dbReference>
<evidence type="ECO:0000255" key="1">
    <source>
        <dbReference type="HAMAP-Rule" id="MF_01951"/>
    </source>
</evidence>